<organism>
    <name type="scientific">Psychromonas ingrahamii (strain DSM 17664 / CCUG 51855 / 37)</name>
    <dbReference type="NCBI Taxonomy" id="357804"/>
    <lineage>
        <taxon>Bacteria</taxon>
        <taxon>Pseudomonadati</taxon>
        <taxon>Pseudomonadota</taxon>
        <taxon>Gammaproteobacteria</taxon>
        <taxon>Alteromonadales</taxon>
        <taxon>Psychromonadaceae</taxon>
        <taxon>Psychromonas</taxon>
    </lineage>
</organism>
<name>RDGC_PSYIN</name>
<evidence type="ECO:0000255" key="1">
    <source>
        <dbReference type="HAMAP-Rule" id="MF_00194"/>
    </source>
</evidence>
<sequence>MFFKNLQVYRFTRPLEQDIDTLERNLEEFKFKPCGSQDISKLGWVFPMGKSGSMYTHIAGKQILICLKKEEKMLPAGVIKDQLNERVEAIELEQGRALKKKEKDSLKEEIVMQLLPRAFSRTSQTFAWIDSESDMLYVDASSTRKAEELISLLRKTLGSLPIVPIQLKNQADVIMTDWLTEGNIPANFALEDEAELCSALEGGGIIRCKQQDLLSDEIKNHLSADKFVTKLALCWADSISFIIGEEFALKRIKFADVLQEQNEDIDKDDFAARFDADFALMTGEIKQLIPAVLAAFGGEQSL</sequence>
<proteinExistence type="inferred from homology"/>
<dbReference type="EMBL" id="CP000510">
    <property type="protein sequence ID" value="ABM03974.1"/>
    <property type="molecule type" value="Genomic_DNA"/>
</dbReference>
<dbReference type="RefSeq" id="WP_011770534.1">
    <property type="nucleotide sequence ID" value="NC_008709.1"/>
</dbReference>
<dbReference type="SMR" id="A1SWV9"/>
<dbReference type="STRING" id="357804.Ping_2233"/>
<dbReference type="KEGG" id="pin:Ping_2233"/>
<dbReference type="eggNOG" id="COG2974">
    <property type="taxonomic scope" value="Bacteria"/>
</dbReference>
<dbReference type="HOGENOM" id="CLU_052038_1_1_6"/>
<dbReference type="OrthoDB" id="5290530at2"/>
<dbReference type="Proteomes" id="UP000000639">
    <property type="component" value="Chromosome"/>
</dbReference>
<dbReference type="GO" id="GO:0043590">
    <property type="term" value="C:bacterial nucleoid"/>
    <property type="evidence" value="ECO:0007669"/>
    <property type="project" value="TreeGrafter"/>
</dbReference>
<dbReference type="GO" id="GO:0005737">
    <property type="term" value="C:cytoplasm"/>
    <property type="evidence" value="ECO:0007669"/>
    <property type="project" value="UniProtKB-UniRule"/>
</dbReference>
<dbReference type="GO" id="GO:0003690">
    <property type="term" value="F:double-stranded DNA binding"/>
    <property type="evidence" value="ECO:0007669"/>
    <property type="project" value="TreeGrafter"/>
</dbReference>
<dbReference type="GO" id="GO:0006310">
    <property type="term" value="P:DNA recombination"/>
    <property type="evidence" value="ECO:0007669"/>
    <property type="project" value="UniProtKB-UniRule"/>
</dbReference>
<dbReference type="GO" id="GO:0000018">
    <property type="term" value="P:regulation of DNA recombination"/>
    <property type="evidence" value="ECO:0007669"/>
    <property type="project" value="TreeGrafter"/>
</dbReference>
<dbReference type="HAMAP" id="MF_00194">
    <property type="entry name" value="RdgC"/>
    <property type="match status" value="1"/>
</dbReference>
<dbReference type="InterPro" id="IPR007476">
    <property type="entry name" value="RdgC"/>
</dbReference>
<dbReference type="NCBIfam" id="NF001462">
    <property type="entry name" value="PRK00321.1-3"/>
    <property type="match status" value="1"/>
</dbReference>
<dbReference type="NCBIfam" id="NF001464">
    <property type="entry name" value="PRK00321.1-5"/>
    <property type="match status" value="1"/>
</dbReference>
<dbReference type="PANTHER" id="PTHR38103">
    <property type="entry name" value="RECOMBINATION-ASSOCIATED PROTEIN RDGC"/>
    <property type="match status" value="1"/>
</dbReference>
<dbReference type="PANTHER" id="PTHR38103:SF1">
    <property type="entry name" value="RECOMBINATION-ASSOCIATED PROTEIN RDGC"/>
    <property type="match status" value="1"/>
</dbReference>
<dbReference type="Pfam" id="PF04381">
    <property type="entry name" value="RdgC"/>
    <property type="match status" value="1"/>
</dbReference>
<comment type="function">
    <text evidence="1">May be involved in recombination.</text>
</comment>
<comment type="subcellular location">
    <subcellularLocation>
        <location evidence="1">Cytoplasm</location>
        <location evidence="1">Nucleoid</location>
    </subcellularLocation>
</comment>
<comment type="similarity">
    <text evidence="1">Belongs to the RdgC family.</text>
</comment>
<keyword id="KW-0963">Cytoplasm</keyword>
<keyword id="KW-0233">DNA recombination</keyword>
<keyword id="KW-1185">Reference proteome</keyword>
<reference key="1">
    <citation type="journal article" date="2008" name="BMC Genomics">
        <title>Genomics of an extreme psychrophile, Psychromonas ingrahamii.</title>
        <authorList>
            <person name="Riley M."/>
            <person name="Staley J.T."/>
            <person name="Danchin A."/>
            <person name="Wang T.Z."/>
            <person name="Brettin T.S."/>
            <person name="Hauser L.J."/>
            <person name="Land M.L."/>
            <person name="Thompson L.S."/>
        </authorList>
    </citation>
    <scope>NUCLEOTIDE SEQUENCE [LARGE SCALE GENOMIC DNA]</scope>
    <source>
        <strain>DSM 17664 / CCUG 51855 / 37</strain>
    </source>
</reference>
<gene>
    <name evidence="1" type="primary">rdgC</name>
    <name type="ordered locus">Ping_2233</name>
</gene>
<protein>
    <recommendedName>
        <fullName evidence="1">Recombination-associated protein RdgC</fullName>
    </recommendedName>
</protein>
<feature type="chain" id="PRO_1000021224" description="Recombination-associated protein RdgC">
    <location>
        <begin position="1"/>
        <end position="302"/>
    </location>
</feature>
<accession>A1SWV9</accession>